<reference evidence="4" key="1">
    <citation type="journal article" date="2016" name="FEBS J.">
        <title>Immunostimulating and Gram-negative-specific antibacterial cyclotides from the butterfly pea Clitoria ternatea.</title>
        <authorList>
            <person name="Nguyen K.N."/>
            <person name="Nguyen G.K."/>
            <person name="Nguyen P.Q."/>
            <person name="Ang K.H."/>
            <person name="Dedon P.C."/>
            <person name="Tam J.P."/>
        </authorList>
    </citation>
    <scope>PROTEIN SEQUENCE</scope>
    <scope>FUNCTION</scope>
    <scope>TISSUE SPECIFICITY</scope>
    <scope>CYCLIZATION</scope>
    <scope>PRESENCE OF DISULFIDE BONDS</scope>
    <scope>MASS SPECTROMETRY</scope>
    <scope>IDENTIFICATION BY MASS SPECTROMETRY</scope>
</reference>
<evidence type="ECO:0000255" key="1">
    <source>
        <dbReference type="PROSITE-ProRule" id="PRU00395"/>
    </source>
</evidence>
<evidence type="ECO:0000269" key="2">
    <source>
    </source>
</evidence>
<evidence type="ECO:0000303" key="3">
    <source>
    </source>
</evidence>
<evidence type="ECO:0000305" key="4"/>
<accession>C0HJS0</accession>
<feature type="peptide" id="PRO_0000436311" description="Cliotide T13" evidence="2">
    <location>
        <begin position="1"/>
        <end position="31"/>
    </location>
</feature>
<feature type="disulfide bond" evidence="1">
    <location>
        <begin position="5"/>
        <end position="21"/>
    </location>
</feature>
<feature type="disulfide bond" evidence="1">
    <location>
        <begin position="9"/>
        <end position="23"/>
    </location>
</feature>
<feature type="disulfide bond" evidence="1">
    <location>
        <begin position="14"/>
        <end position="28"/>
    </location>
</feature>
<feature type="cross-link" description="Cyclopeptide (Asp-Asn)" evidence="2">
    <location>
        <begin position="1"/>
        <end position="31"/>
    </location>
</feature>
<protein>
    <recommendedName>
        <fullName evidence="3">Cliotide T13</fullName>
    </recommendedName>
    <alternativeName>
        <fullName evidence="3">Cyclotide cT13</fullName>
    </alternativeName>
</protein>
<comment type="function">
    <text evidence="1 2">Probably participates in a plant defense mechanism. Not active against Gram-negative bacterium E.coli ATCC 700926 or Gram-positive bacterium S.aureus ATCC 12600 up to a concentration of 100 uM under low-salt conditions (PubMed:27007913).</text>
</comment>
<comment type="tissue specificity">
    <text evidence="2">Expressed in seed but not in root nodules.</text>
</comment>
<comment type="domain">
    <text evidence="4">The presence of a 'disulfide through disulfide knot' structurally defines this protein as a knottin.</text>
</comment>
<comment type="PTM">
    <text evidence="2">Contains 3 disulfide bonds.</text>
</comment>
<comment type="PTM">
    <text evidence="1 2">This is a cyclic peptide.</text>
</comment>
<comment type="mass spectrometry"/>
<comment type="similarity">
    <text evidence="3">Belongs to the cyclotide family. Bracelet subfamily.</text>
</comment>
<name>CYC13_CLITE</name>
<keyword id="KW-0903">Direct protein sequencing</keyword>
<keyword id="KW-1015">Disulfide bond</keyword>
<keyword id="KW-0960">Knottin</keyword>
<keyword id="KW-0611">Plant defense</keyword>
<organism evidence="3">
    <name type="scientific">Clitoria ternatea</name>
    <name type="common">Butterfly pea</name>
    <dbReference type="NCBI Taxonomy" id="43366"/>
    <lineage>
        <taxon>Eukaryota</taxon>
        <taxon>Viridiplantae</taxon>
        <taxon>Streptophyta</taxon>
        <taxon>Embryophyta</taxon>
        <taxon>Tracheophyta</taxon>
        <taxon>Spermatophyta</taxon>
        <taxon>Magnoliopsida</taxon>
        <taxon>eudicotyledons</taxon>
        <taxon>Gunneridae</taxon>
        <taxon>Pentapetalae</taxon>
        <taxon>rosids</taxon>
        <taxon>fabids</taxon>
        <taxon>Fabales</taxon>
        <taxon>Fabaceae</taxon>
        <taxon>Papilionoideae</taxon>
        <taxon>50 kb inversion clade</taxon>
        <taxon>NPAAA clade</taxon>
        <taxon>indigoferoid/millettioid clade</taxon>
        <taxon>Phaseoleae</taxon>
        <taxon>Clitoria</taxon>
    </lineage>
</organism>
<sequence>DTTPCGESCVWIPCVSSIVGCSCQNKVCYQN</sequence>
<dbReference type="SMR" id="C0HJS0"/>
<dbReference type="GO" id="GO:0006952">
    <property type="term" value="P:defense response"/>
    <property type="evidence" value="ECO:0007669"/>
    <property type="project" value="UniProtKB-KW"/>
</dbReference>
<dbReference type="InterPro" id="IPR005535">
    <property type="entry name" value="Cyclotide"/>
</dbReference>
<dbReference type="InterPro" id="IPR012323">
    <property type="entry name" value="Cyclotide_bracelet_CS"/>
</dbReference>
<dbReference type="InterPro" id="IPR036146">
    <property type="entry name" value="Cyclotide_sf"/>
</dbReference>
<dbReference type="Pfam" id="PF03784">
    <property type="entry name" value="Cyclotide"/>
    <property type="match status" value="1"/>
</dbReference>
<dbReference type="PIRSF" id="PIRSF037891">
    <property type="entry name" value="Cycloviolacin"/>
    <property type="match status" value="1"/>
</dbReference>
<dbReference type="SUPFAM" id="SSF57038">
    <property type="entry name" value="Cyclotides"/>
    <property type="match status" value="1"/>
</dbReference>
<dbReference type="PROSITE" id="PS51052">
    <property type="entry name" value="CYCLOTIDE"/>
    <property type="match status" value="1"/>
</dbReference>
<dbReference type="PROSITE" id="PS60008">
    <property type="entry name" value="CYCLOTIDE_BRACELET"/>
    <property type="match status" value="1"/>
</dbReference>
<proteinExistence type="evidence at protein level"/>